<evidence type="ECO:0000255" key="1">
    <source>
        <dbReference type="HAMAP-Rule" id="MF_01200"/>
    </source>
</evidence>
<keyword id="KW-0210">Decarboxylase</keyword>
<keyword id="KW-0456">Lyase</keyword>
<keyword id="KW-0665">Pyrimidine biosynthesis</keyword>
<keyword id="KW-1185">Reference proteome</keyword>
<sequence>MSHSRLIIALDYPEAGPALALADRLSPERCALKVGKELFVAEGPQLVDALVRRGYRVFLDLKFHDIPNTVAGACRSAAATGAWMVNVHALGGAAMMAAAREALGETGDRPLLTAVTVLTSHSDATLREIGLAGPADAAVCRLAELARGAGVDGVVCSAREAALVRERCGDGFLRVTPGIRPAWAAKGDQARVLSPADAVAGGATHLVVGRPVTRADEPLAALARLERELAAQDET</sequence>
<accession>Q0AA48</accession>
<dbReference type="EC" id="4.1.1.23" evidence="1"/>
<dbReference type="EMBL" id="CP000453">
    <property type="protein sequence ID" value="ABI56289.1"/>
    <property type="molecule type" value="Genomic_DNA"/>
</dbReference>
<dbReference type="RefSeq" id="WP_011628684.1">
    <property type="nucleotide sequence ID" value="NC_008340.1"/>
</dbReference>
<dbReference type="SMR" id="Q0AA48"/>
<dbReference type="KEGG" id="aeh:Mlg_0935"/>
<dbReference type="eggNOG" id="COG0284">
    <property type="taxonomic scope" value="Bacteria"/>
</dbReference>
<dbReference type="HOGENOM" id="CLU_067069_0_0_6"/>
<dbReference type="OrthoDB" id="9806203at2"/>
<dbReference type="UniPathway" id="UPA00070">
    <property type="reaction ID" value="UER00120"/>
</dbReference>
<dbReference type="Proteomes" id="UP000001962">
    <property type="component" value="Chromosome"/>
</dbReference>
<dbReference type="GO" id="GO:0005829">
    <property type="term" value="C:cytosol"/>
    <property type="evidence" value="ECO:0007669"/>
    <property type="project" value="TreeGrafter"/>
</dbReference>
<dbReference type="GO" id="GO:0004590">
    <property type="term" value="F:orotidine-5'-phosphate decarboxylase activity"/>
    <property type="evidence" value="ECO:0007669"/>
    <property type="project" value="UniProtKB-UniRule"/>
</dbReference>
<dbReference type="GO" id="GO:0006207">
    <property type="term" value="P:'de novo' pyrimidine nucleobase biosynthetic process"/>
    <property type="evidence" value="ECO:0007669"/>
    <property type="project" value="InterPro"/>
</dbReference>
<dbReference type="GO" id="GO:0044205">
    <property type="term" value="P:'de novo' UMP biosynthetic process"/>
    <property type="evidence" value="ECO:0007669"/>
    <property type="project" value="UniProtKB-UniRule"/>
</dbReference>
<dbReference type="CDD" id="cd04725">
    <property type="entry name" value="OMP_decarboxylase_like"/>
    <property type="match status" value="1"/>
</dbReference>
<dbReference type="FunFam" id="3.20.20.70:FF:000015">
    <property type="entry name" value="Orotidine 5'-phosphate decarboxylase"/>
    <property type="match status" value="1"/>
</dbReference>
<dbReference type="Gene3D" id="3.20.20.70">
    <property type="entry name" value="Aldolase class I"/>
    <property type="match status" value="1"/>
</dbReference>
<dbReference type="HAMAP" id="MF_01200_B">
    <property type="entry name" value="OMPdecase_type1_B"/>
    <property type="match status" value="1"/>
</dbReference>
<dbReference type="InterPro" id="IPR013785">
    <property type="entry name" value="Aldolase_TIM"/>
</dbReference>
<dbReference type="InterPro" id="IPR014732">
    <property type="entry name" value="OMPdecase"/>
</dbReference>
<dbReference type="InterPro" id="IPR018089">
    <property type="entry name" value="OMPdecase_AS"/>
</dbReference>
<dbReference type="InterPro" id="IPR047596">
    <property type="entry name" value="OMPdecase_bac"/>
</dbReference>
<dbReference type="InterPro" id="IPR001754">
    <property type="entry name" value="OMPdeCOase_dom"/>
</dbReference>
<dbReference type="InterPro" id="IPR011060">
    <property type="entry name" value="RibuloseP-bd_barrel"/>
</dbReference>
<dbReference type="NCBIfam" id="NF001273">
    <property type="entry name" value="PRK00230.1"/>
    <property type="match status" value="1"/>
</dbReference>
<dbReference type="NCBIfam" id="TIGR01740">
    <property type="entry name" value="pyrF"/>
    <property type="match status" value="1"/>
</dbReference>
<dbReference type="PANTHER" id="PTHR32119">
    <property type="entry name" value="OROTIDINE 5'-PHOSPHATE DECARBOXYLASE"/>
    <property type="match status" value="1"/>
</dbReference>
<dbReference type="PANTHER" id="PTHR32119:SF2">
    <property type="entry name" value="OROTIDINE 5'-PHOSPHATE DECARBOXYLASE"/>
    <property type="match status" value="1"/>
</dbReference>
<dbReference type="Pfam" id="PF00215">
    <property type="entry name" value="OMPdecase"/>
    <property type="match status" value="1"/>
</dbReference>
<dbReference type="SMART" id="SM00934">
    <property type="entry name" value="OMPdecase"/>
    <property type="match status" value="1"/>
</dbReference>
<dbReference type="SUPFAM" id="SSF51366">
    <property type="entry name" value="Ribulose-phoshate binding barrel"/>
    <property type="match status" value="1"/>
</dbReference>
<dbReference type="PROSITE" id="PS00156">
    <property type="entry name" value="OMPDECASE"/>
    <property type="match status" value="1"/>
</dbReference>
<name>PYRF_ALKEH</name>
<reference key="1">
    <citation type="submission" date="2006-08" db="EMBL/GenBank/DDBJ databases">
        <title>Complete sequence of Alkalilimnicola ehrilichei MLHE-1.</title>
        <authorList>
            <person name="Copeland A."/>
            <person name="Lucas S."/>
            <person name="Lapidus A."/>
            <person name="Barry K."/>
            <person name="Detter J.C."/>
            <person name="Glavina del Rio T."/>
            <person name="Hammon N."/>
            <person name="Israni S."/>
            <person name="Dalin E."/>
            <person name="Tice H."/>
            <person name="Pitluck S."/>
            <person name="Sims D."/>
            <person name="Brettin T."/>
            <person name="Bruce D."/>
            <person name="Han C."/>
            <person name="Tapia R."/>
            <person name="Gilna P."/>
            <person name="Schmutz J."/>
            <person name="Larimer F."/>
            <person name="Land M."/>
            <person name="Hauser L."/>
            <person name="Kyrpides N."/>
            <person name="Mikhailova N."/>
            <person name="Oremland R.S."/>
            <person name="Hoeft S.E."/>
            <person name="Switzer-Blum J."/>
            <person name="Kulp T."/>
            <person name="King G."/>
            <person name="Tabita R."/>
            <person name="Witte B."/>
            <person name="Santini J.M."/>
            <person name="Basu P."/>
            <person name="Hollibaugh J.T."/>
            <person name="Xie G."/>
            <person name="Stolz J.F."/>
            <person name="Richardson P."/>
        </authorList>
    </citation>
    <scope>NUCLEOTIDE SEQUENCE [LARGE SCALE GENOMIC DNA]</scope>
    <source>
        <strain>ATCC BAA-1101 / DSM 17681 / MLHE-1</strain>
    </source>
</reference>
<protein>
    <recommendedName>
        <fullName evidence="1">Orotidine 5'-phosphate decarboxylase</fullName>
        <ecNumber evidence="1">4.1.1.23</ecNumber>
    </recommendedName>
    <alternativeName>
        <fullName evidence="1">OMP decarboxylase</fullName>
        <shortName evidence="1">OMPDCase</shortName>
        <shortName evidence="1">OMPdecase</shortName>
    </alternativeName>
</protein>
<organism>
    <name type="scientific">Alkalilimnicola ehrlichii (strain ATCC BAA-1101 / DSM 17681 / MLHE-1)</name>
    <dbReference type="NCBI Taxonomy" id="187272"/>
    <lineage>
        <taxon>Bacteria</taxon>
        <taxon>Pseudomonadati</taxon>
        <taxon>Pseudomonadota</taxon>
        <taxon>Gammaproteobacteria</taxon>
        <taxon>Chromatiales</taxon>
        <taxon>Ectothiorhodospiraceae</taxon>
        <taxon>Alkalilimnicola</taxon>
    </lineage>
</organism>
<gene>
    <name evidence="1" type="primary">pyrF</name>
    <name type="ordered locus">Mlg_0935</name>
</gene>
<comment type="function">
    <text evidence="1">Catalyzes the decarboxylation of orotidine 5'-monophosphate (OMP) to uridine 5'-monophosphate (UMP).</text>
</comment>
<comment type="catalytic activity">
    <reaction evidence="1">
        <text>orotidine 5'-phosphate + H(+) = UMP + CO2</text>
        <dbReference type="Rhea" id="RHEA:11596"/>
        <dbReference type="ChEBI" id="CHEBI:15378"/>
        <dbReference type="ChEBI" id="CHEBI:16526"/>
        <dbReference type="ChEBI" id="CHEBI:57538"/>
        <dbReference type="ChEBI" id="CHEBI:57865"/>
        <dbReference type="EC" id="4.1.1.23"/>
    </reaction>
</comment>
<comment type="pathway">
    <text evidence="1">Pyrimidine metabolism; UMP biosynthesis via de novo pathway; UMP from orotate: step 2/2.</text>
</comment>
<comment type="subunit">
    <text evidence="1">Homodimer.</text>
</comment>
<comment type="similarity">
    <text evidence="1">Belongs to the OMP decarboxylase family. Type 1 subfamily.</text>
</comment>
<feature type="chain" id="PRO_1000065892" description="Orotidine 5'-phosphate decarboxylase">
    <location>
        <begin position="1"/>
        <end position="235"/>
    </location>
</feature>
<feature type="active site" description="Proton donor" evidence="1">
    <location>
        <position position="62"/>
    </location>
</feature>
<feature type="binding site" evidence="1">
    <location>
        <position position="11"/>
    </location>
    <ligand>
        <name>substrate</name>
    </ligand>
</feature>
<feature type="binding site" evidence="1">
    <location>
        <position position="33"/>
    </location>
    <ligand>
        <name>substrate</name>
    </ligand>
</feature>
<feature type="binding site" evidence="1">
    <location>
        <begin position="60"/>
        <end position="69"/>
    </location>
    <ligand>
        <name>substrate</name>
    </ligand>
</feature>
<feature type="binding site" evidence="1">
    <location>
        <position position="119"/>
    </location>
    <ligand>
        <name>substrate</name>
    </ligand>
</feature>
<feature type="binding site" evidence="1">
    <location>
        <position position="180"/>
    </location>
    <ligand>
        <name>substrate</name>
    </ligand>
</feature>
<feature type="binding site" evidence="1">
    <location>
        <position position="189"/>
    </location>
    <ligand>
        <name>substrate</name>
    </ligand>
</feature>
<feature type="binding site" evidence="1">
    <location>
        <position position="209"/>
    </location>
    <ligand>
        <name>substrate</name>
    </ligand>
</feature>
<feature type="binding site" evidence="1">
    <location>
        <position position="210"/>
    </location>
    <ligand>
        <name>substrate</name>
    </ligand>
</feature>
<proteinExistence type="inferred from homology"/>